<gene>
    <name evidence="1" type="primary">rpsM</name>
    <name type="ordered locus">Shewana3_0221</name>
</gene>
<organism>
    <name type="scientific">Shewanella sp. (strain ANA-3)</name>
    <dbReference type="NCBI Taxonomy" id="94122"/>
    <lineage>
        <taxon>Bacteria</taxon>
        <taxon>Pseudomonadati</taxon>
        <taxon>Pseudomonadota</taxon>
        <taxon>Gammaproteobacteria</taxon>
        <taxon>Alteromonadales</taxon>
        <taxon>Shewanellaceae</taxon>
        <taxon>Shewanella</taxon>
    </lineage>
</organism>
<dbReference type="EMBL" id="CP000469">
    <property type="protein sequence ID" value="ABK46465.1"/>
    <property type="molecule type" value="Genomic_DNA"/>
</dbReference>
<dbReference type="RefSeq" id="WP_011070630.1">
    <property type="nucleotide sequence ID" value="NC_008577.1"/>
</dbReference>
<dbReference type="SMR" id="A0KRP6"/>
<dbReference type="STRING" id="94122.Shewana3_0221"/>
<dbReference type="GeneID" id="94726208"/>
<dbReference type="KEGG" id="shn:Shewana3_0221"/>
<dbReference type="eggNOG" id="COG0099">
    <property type="taxonomic scope" value="Bacteria"/>
</dbReference>
<dbReference type="HOGENOM" id="CLU_103849_1_2_6"/>
<dbReference type="OrthoDB" id="9803610at2"/>
<dbReference type="Proteomes" id="UP000002589">
    <property type="component" value="Chromosome"/>
</dbReference>
<dbReference type="GO" id="GO:0005829">
    <property type="term" value="C:cytosol"/>
    <property type="evidence" value="ECO:0007669"/>
    <property type="project" value="TreeGrafter"/>
</dbReference>
<dbReference type="GO" id="GO:0015935">
    <property type="term" value="C:small ribosomal subunit"/>
    <property type="evidence" value="ECO:0007669"/>
    <property type="project" value="TreeGrafter"/>
</dbReference>
<dbReference type="GO" id="GO:0019843">
    <property type="term" value="F:rRNA binding"/>
    <property type="evidence" value="ECO:0007669"/>
    <property type="project" value="UniProtKB-UniRule"/>
</dbReference>
<dbReference type="GO" id="GO:0003735">
    <property type="term" value="F:structural constituent of ribosome"/>
    <property type="evidence" value="ECO:0007669"/>
    <property type="project" value="InterPro"/>
</dbReference>
<dbReference type="GO" id="GO:0000049">
    <property type="term" value="F:tRNA binding"/>
    <property type="evidence" value="ECO:0007669"/>
    <property type="project" value="UniProtKB-UniRule"/>
</dbReference>
<dbReference type="GO" id="GO:0006412">
    <property type="term" value="P:translation"/>
    <property type="evidence" value="ECO:0007669"/>
    <property type="project" value="UniProtKB-UniRule"/>
</dbReference>
<dbReference type="FunFam" id="1.10.8.50:FF:000001">
    <property type="entry name" value="30S ribosomal protein S13"/>
    <property type="match status" value="1"/>
</dbReference>
<dbReference type="FunFam" id="4.10.910.10:FF:000001">
    <property type="entry name" value="30S ribosomal protein S13"/>
    <property type="match status" value="1"/>
</dbReference>
<dbReference type="Gene3D" id="1.10.8.50">
    <property type="match status" value="1"/>
</dbReference>
<dbReference type="Gene3D" id="4.10.910.10">
    <property type="entry name" value="30s ribosomal protein s13, domain 2"/>
    <property type="match status" value="1"/>
</dbReference>
<dbReference type="HAMAP" id="MF_01315">
    <property type="entry name" value="Ribosomal_uS13"/>
    <property type="match status" value="1"/>
</dbReference>
<dbReference type="InterPro" id="IPR027437">
    <property type="entry name" value="Rbsml_uS13_C"/>
</dbReference>
<dbReference type="InterPro" id="IPR001892">
    <property type="entry name" value="Ribosomal_uS13"/>
</dbReference>
<dbReference type="InterPro" id="IPR010979">
    <property type="entry name" value="Ribosomal_uS13-like_H2TH"/>
</dbReference>
<dbReference type="InterPro" id="IPR019980">
    <property type="entry name" value="Ribosomal_uS13_bac-type"/>
</dbReference>
<dbReference type="InterPro" id="IPR018269">
    <property type="entry name" value="Ribosomal_uS13_CS"/>
</dbReference>
<dbReference type="NCBIfam" id="TIGR03631">
    <property type="entry name" value="uS13_bact"/>
    <property type="match status" value="1"/>
</dbReference>
<dbReference type="PANTHER" id="PTHR10871">
    <property type="entry name" value="30S RIBOSOMAL PROTEIN S13/40S RIBOSOMAL PROTEIN S18"/>
    <property type="match status" value="1"/>
</dbReference>
<dbReference type="PANTHER" id="PTHR10871:SF1">
    <property type="entry name" value="SMALL RIBOSOMAL SUBUNIT PROTEIN US13M"/>
    <property type="match status" value="1"/>
</dbReference>
<dbReference type="Pfam" id="PF00416">
    <property type="entry name" value="Ribosomal_S13"/>
    <property type="match status" value="1"/>
</dbReference>
<dbReference type="PIRSF" id="PIRSF002134">
    <property type="entry name" value="Ribosomal_S13"/>
    <property type="match status" value="1"/>
</dbReference>
<dbReference type="SUPFAM" id="SSF46946">
    <property type="entry name" value="S13-like H2TH domain"/>
    <property type="match status" value="1"/>
</dbReference>
<dbReference type="PROSITE" id="PS00646">
    <property type="entry name" value="RIBOSOMAL_S13_1"/>
    <property type="match status" value="1"/>
</dbReference>
<dbReference type="PROSITE" id="PS50159">
    <property type="entry name" value="RIBOSOMAL_S13_2"/>
    <property type="match status" value="1"/>
</dbReference>
<reference key="1">
    <citation type="submission" date="2006-09" db="EMBL/GenBank/DDBJ databases">
        <title>Complete sequence of chromosome 1 of Shewanella sp. ANA-3.</title>
        <authorList>
            <person name="Copeland A."/>
            <person name="Lucas S."/>
            <person name="Lapidus A."/>
            <person name="Barry K."/>
            <person name="Detter J.C."/>
            <person name="Glavina del Rio T."/>
            <person name="Hammon N."/>
            <person name="Israni S."/>
            <person name="Dalin E."/>
            <person name="Tice H."/>
            <person name="Pitluck S."/>
            <person name="Chertkov O."/>
            <person name="Brettin T."/>
            <person name="Bruce D."/>
            <person name="Han C."/>
            <person name="Tapia R."/>
            <person name="Gilna P."/>
            <person name="Schmutz J."/>
            <person name="Larimer F."/>
            <person name="Land M."/>
            <person name="Hauser L."/>
            <person name="Kyrpides N."/>
            <person name="Kim E."/>
            <person name="Newman D."/>
            <person name="Salticov C."/>
            <person name="Konstantinidis K."/>
            <person name="Klappenback J."/>
            <person name="Tiedje J."/>
            <person name="Richardson P."/>
        </authorList>
    </citation>
    <scope>NUCLEOTIDE SEQUENCE [LARGE SCALE GENOMIC DNA]</scope>
    <source>
        <strain>ANA-3</strain>
    </source>
</reference>
<feature type="chain" id="PRO_0000306706" description="Small ribosomal subunit protein uS13">
    <location>
        <begin position="1"/>
        <end position="118"/>
    </location>
</feature>
<feature type="region of interest" description="Disordered" evidence="2">
    <location>
        <begin position="94"/>
        <end position="118"/>
    </location>
</feature>
<evidence type="ECO:0000255" key="1">
    <source>
        <dbReference type="HAMAP-Rule" id="MF_01315"/>
    </source>
</evidence>
<evidence type="ECO:0000256" key="2">
    <source>
        <dbReference type="SAM" id="MobiDB-lite"/>
    </source>
</evidence>
<evidence type="ECO:0000305" key="3"/>
<comment type="function">
    <text evidence="1">Located at the top of the head of the 30S subunit, it contacts several helices of the 16S rRNA. In the 70S ribosome it contacts the 23S rRNA (bridge B1a) and protein L5 of the 50S subunit (bridge B1b), connecting the 2 subunits; these bridges are implicated in subunit movement. Contacts the tRNAs in the A and P-sites.</text>
</comment>
<comment type="subunit">
    <text evidence="1">Part of the 30S ribosomal subunit. Forms a loose heterodimer with protein S19. Forms two bridges to the 50S subunit in the 70S ribosome.</text>
</comment>
<comment type="similarity">
    <text evidence="1">Belongs to the universal ribosomal protein uS13 family.</text>
</comment>
<keyword id="KW-0687">Ribonucleoprotein</keyword>
<keyword id="KW-0689">Ribosomal protein</keyword>
<keyword id="KW-0694">RNA-binding</keyword>
<keyword id="KW-0699">rRNA-binding</keyword>
<keyword id="KW-0820">tRNA-binding</keyword>
<protein>
    <recommendedName>
        <fullName evidence="1">Small ribosomal subunit protein uS13</fullName>
    </recommendedName>
    <alternativeName>
        <fullName evidence="3">30S ribosomal protein S13</fullName>
    </alternativeName>
</protein>
<sequence>MARIAGINIPDQKHTVIALTAIFGIGRTRARAICAATSIAETAKIKELSEAQIDTLREEVAKYLVEGDLRREISMNIKRLMDLGCYRGLRHRRSLPLRGQRTKTNARTRKGPRKPIKK</sequence>
<accession>A0KRP6</accession>
<name>RS13_SHESA</name>
<proteinExistence type="inferred from homology"/>